<accession>P46544</accession>
<name>PIP_LACDE</name>
<dbReference type="EC" id="3.4.11.5"/>
<dbReference type="EMBL" id="L10712">
    <property type="protein sequence ID" value="AAA61596.1"/>
    <property type="molecule type" value="Genomic_DNA"/>
</dbReference>
<dbReference type="SMR" id="P46544"/>
<dbReference type="ESTHER" id="lacdl-pip">
    <property type="family name" value="Proline_iminopeptidase"/>
</dbReference>
<dbReference type="MEROPS" id="S33.021"/>
<dbReference type="SABIO-RK" id="P46544"/>
<dbReference type="GO" id="GO:0030313">
    <property type="term" value="C:cell envelope"/>
    <property type="evidence" value="ECO:0007669"/>
    <property type="project" value="UniProtKB-SubCell"/>
</dbReference>
<dbReference type="GO" id="GO:0016020">
    <property type="term" value="C:membrane"/>
    <property type="evidence" value="ECO:0007669"/>
    <property type="project" value="TreeGrafter"/>
</dbReference>
<dbReference type="GO" id="GO:0004177">
    <property type="term" value="F:aminopeptidase activity"/>
    <property type="evidence" value="ECO:0007669"/>
    <property type="project" value="UniProtKB-KW"/>
</dbReference>
<dbReference type="GO" id="GO:0047372">
    <property type="term" value="F:monoacylglycerol lipase activity"/>
    <property type="evidence" value="ECO:0007669"/>
    <property type="project" value="TreeGrafter"/>
</dbReference>
<dbReference type="GO" id="GO:0046464">
    <property type="term" value="P:acylglycerol catabolic process"/>
    <property type="evidence" value="ECO:0007669"/>
    <property type="project" value="TreeGrafter"/>
</dbReference>
<dbReference type="GO" id="GO:0006508">
    <property type="term" value="P:proteolysis"/>
    <property type="evidence" value="ECO:0007669"/>
    <property type="project" value="UniProtKB-KW"/>
</dbReference>
<dbReference type="Gene3D" id="3.40.50.1820">
    <property type="entry name" value="alpha/beta hydrolase"/>
    <property type="match status" value="1"/>
</dbReference>
<dbReference type="InterPro" id="IPR000073">
    <property type="entry name" value="AB_hydrolase_1"/>
</dbReference>
<dbReference type="InterPro" id="IPR029058">
    <property type="entry name" value="AB_hydrolase_fold"/>
</dbReference>
<dbReference type="InterPro" id="IPR050266">
    <property type="entry name" value="AB_hydrolase_sf"/>
</dbReference>
<dbReference type="InterPro" id="IPR002410">
    <property type="entry name" value="Peptidase_S33"/>
</dbReference>
<dbReference type="InterPro" id="IPR005945">
    <property type="entry name" value="Pro_imino_pep"/>
</dbReference>
<dbReference type="NCBIfam" id="TIGR01250">
    <property type="entry name" value="pro_imino_pep_2"/>
    <property type="match status" value="1"/>
</dbReference>
<dbReference type="NCBIfam" id="NF045945">
    <property type="entry name" value="ProImpepLactob"/>
    <property type="match status" value="1"/>
</dbReference>
<dbReference type="PANTHER" id="PTHR43798:SF33">
    <property type="entry name" value="HYDROLASE, PUTATIVE (AFU_ORTHOLOGUE AFUA_2G14860)-RELATED"/>
    <property type="match status" value="1"/>
</dbReference>
<dbReference type="PANTHER" id="PTHR43798">
    <property type="entry name" value="MONOACYLGLYCEROL LIPASE"/>
    <property type="match status" value="1"/>
</dbReference>
<dbReference type="Pfam" id="PF00561">
    <property type="entry name" value="Abhydrolase_1"/>
    <property type="match status" value="1"/>
</dbReference>
<dbReference type="PIRSF" id="PIRSF005539">
    <property type="entry name" value="Pept_S33_TRI_F1"/>
    <property type="match status" value="1"/>
</dbReference>
<dbReference type="PRINTS" id="PR00793">
    <property type="entry name" value="PROAMNOPTASE"/>
</dbReference>
<dbReference type="SUPFAM" id="SSF53474">
    <property type="entry name" value="alpha/beta-Hydrolases"/>
    <property type="match status" value="1"/>
</dbReference>
<protein>
    <recommendedName>
        <fullName>Proline iminopeptidase</fullName>
        <shortName>PIP</shortName>
        <ecNumber>3.4.11.5</ecNumber>
    </recommendedName>
    <alternativeName>
        <fullName>Prolyl aminopeptidase</fullName>
        <shortName>PAP</shortName>
    </alternativeName>
</protein>
<keyword id="KW-0031">Aminopeptidase</keyword>
<keyword id="KW-0903">Direct protein sequencing</keyword>
<keyword id="KW-0378">Hydrolase</keyword>
<keyword id="KW-0645">Protease</keyword>
<organism>
    <name type="scientific">Lactobacillus delbrueckii subsp. bulgaricus</name>
    <dbReference type="NCBI Taxonomy" id="1585"/>
    <lineage>
        <taxon>Bacteria</taxon>
        <taxon>Bacillati</taxon>
        <taxon>Bacillota</taxon>
        <taxon>Bacilli</taxon>
        <taxon>Lactobacillales</taxon>
        <taxon>Lactobacillaceae</taxon>
        <taxon>Lactobacillus</taxon>
    </lineage>
</organism>
<feature type="chain" id="PRO_0000080836" description="Proline iminopeptidase">
    <location>
        <begin position="1"/>
        <end position="295"/>
    </location>
</feature>
<feature type="domain" description="AB hydrolase-1" evidence="2">
    <location>
        <begin position="29"/>
        <end position="279"/>
    </location>
</feature>
<feature type="active site" description="Nucleophile" evidence="1">
    <location>
        <position position="107"/>
    </location>
</feature>
<feature type="active site" evidence="1">
    <location>
        <position position="246"/>
    </location>
</feature>
<feature type="active site" description="Proton donor" evidence="1">
    <location>
        <position position="273"/>
    </location>
</feature>
<feature type="mutagenesis site" description="0.1% of wild-type activity." evidence="5">
    <original>H</original>
    <variation>Q</variation>
    <location>
        <position position="34"/>
    </location>
</feature>
<feature type="mutagenesis site" description="0.1% of wild-type activity." evidence="5">
    <original>G</original>
    <variation>D</variation>
    <location>
        <position position="35"/>
    </location>
</feature>
<feature type="mutagenesis site" description="Loss of activity." evidence="5">
    <original>G</original>
    <variation>E</variation>
    <location>
        <position position="36"/>
    </location>
</feature>
<feature type="mutagenesis site" description="Loss of activity." evidence="5">
    <original>P</original>
    <variation>L</variation>
    <location>
        <position position="37"/>
    </location>
</feature>
<feature type="mutagenesis site" description="Loss of activity." evidence="5">
    <original>G</original>
    <variation>D</variation>
    <location>
        <position position="38"/>
    </location>
</feature>
<feature type="mutagenesis site" description="Loss of activity." evidence="5">
    <original>D</original>
    <variation>G</variation>
    <location>
        <position position="62"/>
    </location>
</feature>
<feature type="mutagenesis site" description="Loss of activity." evidence="5">
    <original>G</original>
    <variation>D</variation>
    <location>
        <position position="65"/>
    </location>
</feature>
<feature type="mutagenesis site" description="Loss of activity." evidence="5">
    <original>S</original>
    <variation>F</variation>
    <location>
        <position position="69"/>
    </location>
</feature>
<feature type="mutagenesis site" description="95.4% of wild-type activity." evidence="5">
    <original>P</original>
    <variation>A</variation>
    <location>
        <position position="72"/>
    </location>
</feature>
<feature type="mutagenesis site" description="Loss of activity." evidence="5">
    <original>E</original>
    <variation>K</variation>
    <location>
        <position position="88"/>
    </location>
</feature>
<feature type="mutagenesis site" description="0.2% of wild-type activity." evidence="5">
    <original>G</original>
    <variation>E</variation>
    <location>
        <position position="105"/>
    </location>
</feature>
<feature type="mutagenesis site" description="21.8% of wild-type activity. KM=0.2 mM for prolyl-pNA." evidence="5">
    <original>Q</original>
    <variation>L</variation>
    <location>
        <position position="106"/>
    </location>
</feature>
<feature type="mutagenesis site" description="Loss of activity." evidence="5">
    <original>S</original>
    <variation>G</variation>
    <variation>N</variation>
    <location>
        <position position="107"/>
    </location>
</feature>
<feature type="mutagenesis site" description="37.9% of wild-type activity. KM=4.0 mM for prolyl-pNA." evidence="5">
    <original>W</original>
    <variation>Y</variation>
    <location>
        <position position="108"/>
    </location>
</feature>
<feature type="mutagenesis site" description="0.2% of wild-type activity. KM=2.3 mM for prolyl-pNA." evidence="5">
    <original>G</original>
    <variation>A</variation>
    <location>
        <position position="109"/>
    </location>
</feature>
<feature type="mutagenesis site" description="Loss of activity." evidence="5">
    <original>G</original>
    <variation>S</variation>
    <variation>D</variation>
    <location>
        <position position="109"/>
    </location>
</feature>
<feature type="mutagenesis site" description="Loss of activity." evidence="5">
    <original>G</original>
    <variation>E</variation>
    <location>
        <position position="110"/>
    </location>
</feature>
<feature type="mutagenesis site" description="Loss of activity." evidence="5">
    <original>S</original>
    <variation>F</variation>
    <location>
        <position position="132"/>
    </location>
</feature>
<feature type="mutagenesis site" description="Loss of activity." evidence="5">
    <original>E</original>
    <variation>K</variation>
    <location>
        <position position="143"/>
    </location>
</feature>
<feature type="mutagenesis site" description="89.2% of wild-type activity." evidence="5">
    <original>P</original>
    <variation>A</variation>
    <location>
        <position position="237"/>
    </location>
</feature>
<feature type="mutagenesis site" description="Loss of activity." evidence="5">
    <original>G</original>
    <variation>D</variation>
    <location>
        <position position="243"/>
    </location>
</feature>
<feature type="mutagenesis site" description="22.5% of wild-type activity. KM=1.0 mM for prolyl-pNA." evidence="5">
    <original>D</original>
    <variation>G</variation>
    <location>
        <position position="245"/>
    </location>
</feature>
<feature type="mutagenesis site" description="0.1% of wild-type activity. KM=1.0 mM for prolyl-pNA." evidence="5">
    <original>D</original>
    <variation>G</variation>
    <location>
        <position position="246"/>
    </location>
</feature>
<feature type="mutagenesis site" description="Loss of activity." evidence="5">
    <original>H</original>
    <variation>Q</variation>
    <location>
        <position position="273"/>
    </location>
</feature>
<comment type="function">
    <text evidence="4">Releases the N-terminal proline from various substrates. Has a high specificity towards di- or tripeptides with proline at the NH(2)-terminal position, but is not able to hydrolyze longer peptides, or peptides with hydroxyproline at the NH(2)-end. Partially hydrolyzes also peptides with alanine, glycine and leucine at the NH(2)-terminal position.</text>
</comment>
<comment type="catalytic activity">
    <reaction evidence="3 4 5">
        <text>Release of N-terminal proline from a peptide.</text>
        <dbReference type="EC" id="3.4.11.5"/>
    </reaction>
</comment>
<comment type="activity regulation">
    <text evidence="4">Inhibited strongly by 3,4-dichloroisocoumarin, bestatin and heavy metal ions. Inactivated by p-chloromercuribenzoate, but reactivated by dithiothreitol.</text>
</comment>
<comment type="biophysicochemical properties">
    <kinetics>
        <KM evidence="4 5">0.93 mM for prolyl-pNA (at 30 degrees Celsius and pH 7.0)</KM>
        <Vmax evidence="4 5">738.0 mmol/min/mg enzyme with prolyl-pNA as substrate (at 30 degrees Celsius and pH 7.0)</Vmax>
    </kinetics>
    <phDependence>
        <text evidence="4 5">Optimum pH is 6-7.</text>
    </phDependence>
    <temperatureDependence>
        <text evidence="4 5">Stable at temperatures below 40 degrees Celsius.</text>
    </temperatureDependence>
</comment>
<comment type="subunit">
    <text evidence="4">Homotrimer.</text>
</comment>
<comment type="subcellular location">
    <subcellularLocation>
        <location evidence="3">Cell envelope</location>
    </subcellularLocation>
</comment>
<comment type="similarity">
    <text evidence="6">Belongs to the peptidase S33 family.</text>
</comment>
<sequence>MMQITEKYLPFGNWQTYCRIVGEATDRAPLLLLHGGPGSSHNYFEVLDQVAEKSGRQVIMYDQLGCGNSSIPDDQAETAYTAQTWVKELENVREQLGLDQIHLLGQSWGGMLALIYLCDYQPEGVKSLILSSTLASAKLWSQELHRLIKYLPKGEQAAIKEAETTGNYDSLAYQAANAHFMDQHAIKLTPDLPEPVLRKKKGGSLAYLTGWGPNEYTPIGNLHGYEYTDRLKDLHLPALITSGTDDLCTPLVAKSMYDNLPNARWELFAGCGHMPFVQENAKYQELLSDWLISQD</sequence>
<reference key="1">
    <citation type="journal article" date="1994" name="Microbiology">
        <title>Cloning, sequencing and characterization of the pepIP gene encoding a proline iminopeptidase from Lactobacillus delbrueckii subsp. bulgaricus CNRZ 397.</title>
        <authorList>
            <person name="Atlan D."/>
            <person name="Gilbert C."/>
            <person name="Blanc B."/>
            <person name="Portalier R."/>
        </authorList>
    </citation>
    <scope>NUCLEOTIDE SEQUENCE [GENOMIC DNA]</scope>
    <scope>PROTEIN SEQUENCE OF 1-11</scope>
    <scope>CATALYTIC ACTIVITY</scope>
    <scope>SUBCELLULAR LOCATION</scope>
    <source>
        <strain>CNRZ 397</strain>
    </source>
</reference>
<reference key="2">
    <citation type="journal article" date="1994" name="Microbiology">
        <title>Proline iminopeptidase from Lactobacillus delbrueckii subsp. bulgaricus CNRZ 397: purification and characterization.</title>
        <authorList>
            <person name="Gilbert C."/>
            <person name="Atlan D."/>
            <person name="Blanc B."/>
            <person name="Portalier R."/>
        </authorList>
    </citation>
    <scope>PROTEIN SEQUENCE OF 1-11</scope>
    <scope>FUNCTION</scope>
    <scope>CATALYTIC ACTIVITY</scope>
    <scope>ACTIVITY REGULATION</scope>
    <scope>BIOPHYSICOCHEMICAL PROPERTIES</scope>
    <scope>SUBSTRATE SPECIFICITY</scope>
    <scope>SUBUNIT</scope>
    <source>
        <strain>CNRZ 397</strain>
    </source>
</reference>
<reference key="3">
    <citation type="journal article" date="1999" name="Biochim. Biophys. Acta">
        <title>The prolyl aminopeptidase from Lactobacillus delbrueckii subsp. bulgaricus belongs to the alpha/beta hydrolase fold family.</title>
        <authorList>
            <person name="Morel F."/>
            <person name="Gilbert C."/>
            <person name="Geourjon C."/>
            <person name="Frot-Coutaz J."/>
            <person name="Portalier R."/>
            <person name="Atlan D."/>
        </authorList>
    </citation>
    <scope>CATALYTIC ACTIVITY</scope>
    <scope>BIOPHYSICOCHEMICAL PROPERTIES</scope>
    <scope>CIRCULAR DICHROISM</scope>
    <scope>MUTAGENESIS OF HIS-34; GLY-35; GLY-36; PRO-37; GLY-38; ASP-62; GLY-65; SER-69; PRO-72; GLU-88; GLY-105; GLN-106; SER-107; TRP-108; GLY-109; GLY-110; SER-132; GLU-143; PRO-237; GLY-243; ASP-245; ASP-246 AND HIS-273</scope>
</reference>
<evidence type="ECO:0000250" key="1"/>
<evidence type="ECO:0000255" key="2"/>
<evidence type="ECO:0000269" key="3">
    <source>
    </source>
</evidence>
<evidence type="ECO:0000269" key="4">
    <source>
    </source>
</evidence>
<evidence type="ECO:0000269" key="5">
    <source>
    </source>
</evidence>
<evidence type="ECO:0000305" key="6"/>
<gene>
    <name type="primary">pepIP</name>
</gene>
<proteinExistence type="evidence at protein level"/>